<gene>
    <name type="primary">narX</name>
    <name type="ordered locus">Rv1736c</name>
</gene>
<dbReference type="EMBL" id="AL123456">
    <property type="protein sequence ID" value="CCP44502.1"/>
    <property type="molecule type" value="Genomic_DNA"/>
</dbReference>
<dbReference type="PIR" id="C70688">
    <property type="entry name" value="C70688"/>
</dbReference>
<dbReference type="RefSeq" id="NP_216252.1">
    <property type="nucleotide sequence ID" value="NC_000962.3"/>
</dbReference>
<dbReference type="SMR" id="P9WJQ1"/>
<dbReference type="FunCoup" id="P9WJQ1">
    <property type="interactions" value="57"/>
</dbReference>
<dbReference type="STRING" id="83332.Rv1736c"/>
<dbReference type="PaxDb" id="83332-Rv1736c"/>
<dbReference type="GeneID" id="885213"/>
<dbReference type="KEGG" id="mtu:Rv1736c"/>
<dbReference type="KEGG" id="mtv:RVBD_1736c"/>
<dbReference type="PATRIC" id="fig|83332.111.peg.1930"/>
<dbReference type="TubercuList" id="Rv1736c"/>
<dbReference type="eggNOG" id="COG2180">
    <property type="taxonomic scope" value="Bacteria"/>
</dbReference>
<dbReference type="eggNOG" id="COG2181">
    <property type="taxonomic scope" value="Bacteria"/>
</dbReference>
<dbReference type="eggNOG" id="COG5013">
    <property type="taxonomic scope" value="Bacteria"/>
</dbReference>
<dbReference type="InParanoid" id="P9WJQ1"/>
<dbReference type="OrthoDB" id="4307003at2"/>
<dbReference type="Proteomes" id="UP000001584">
    <property type="component" value="Chromosome"/>
</dbReference>
<dbReference type="GO" id="GO:0016020">
    <property type="term" value="C:membrane"/>
    <property type="evidence" value="ECO:0000318"/>
    <property type="project" value="GO_Central"/>
</dbReference>
<dbReference type="GO" id="GO:0009325">
    <property type="term" value="C:nitrate reductase complex"/>
    <property type="evidence" value="ECO:0007669"/>
    <property type="project" value="InterPro"/>
</dbReference>
<dbReference type="GO" id="GO:0005886">
    <property type="term" value="C:plasma membrane"/>
    <property type="evidence" value="ECO:0007669"/>
    <property type="project" value="UniProtKB-SubCell"/>
</dbReference>
<dbReference type="GO" id="GO:0051539">
    <property type="term" value="F:4 iron, 4 sulfur cluster binding"/>
    <property type="evidence" value="ECO:0007669"/>
    <property type="project" value="UniProtKB-KW"/>
</dbReference>
<dbReference type="GO" id="GO:0046872">
    <property type="term" value="F:metal ion binding"/>
    <property type="evidence" value="ECO:0007669"/>
    <property type="project" value="UniProtKB-KW"/>
</dbReference>
<dbReference type="GO" id="GO:0008940">
    <property type="term" value="F:nitrate reductase activity"/>
    <property type="evidence" value="ECO:0007669"/>
    <property type="project" value="InterPro"/>
</dbReference>
<dbReference type="GO" id="GO:0051082">
    <property type="term" value="F:unfolded protein binding"/>
    <property type="evidence" value="ECO:0007669"/>
    <property type="project" value="InterPro"/>
</dbReference>
<dbReference type="GO" id="GO:0051131">
    <property type="term" value="P:chaperone-mediated protein complex assembly"/>
    <property type="evidence" value="ECO:0007669"/>
    <property type="project" value="InterPro"/>
</dbReference>
<dbReference type="GO" id="GO:0042128">
    <property type="term" value="P:nitrate assimilation"/>
    <property type="evidence" value="ECO:0007669"/>
    <property type="project" value="UniProtKB-KW"/>
</dbReference>
<dbReference type="GO" id="GO:0001666">
    <property type="term" value="P:response to hypoxia"/>
    <property type="evidence" value="ECO:0000270"/>
    <property type="project" value="MTBBASE"/>
</dbReference>
<dbReference type="FunFam" id="1.20.950.20:FF:000001">
    <property type="entry name" value="Respiratory nitrate reductase subunit gamma"/>
    <property type="match status" value="1"/>
</dbReference>
<dbReference type="Gene3D" id="3.40.50.12440">
    <property type="match status" value="1"/>
</dbReference>
<dbReference type="Gene3D" id="1.20.950.20">
    <property type="entry name" value="Transmembrane di-heme cytochromes, Chain C"/>
    <property type="match status" value="1"/>
</dbReference>
<dbReference type="InterPro" id="IPR020945">
    <property type="entry name" value="DMSO/NO3_reduct_chaperone"/>
</dbReference>
<dbReference type="InterPro" id="IPR051936">
    <property type="entry name" value="Heme-iron_electron_transfer"/>
</dbReference>
<dbReference type="InterPro" id="IPR006656">
    <property type="entry name" value="Mopterin_OxRdtase"/>
</dbReference>
<dbReference type="InterPro" id="IPR006963">
    <property type="entry name" value="Mopterin_OxRdtase_4Fe-4S_dom"/>
</dbReference>
<dbReference type="InterPro" id="IPR027467">
    <property type="entry name" value="MopterinOxRdtase_cofactor_BS"/>
</dbReference>
<dbReference type="InterPro" id="IPR023234">
    <property type="entry name" value="NarG-like_domain"/>
</dbReference>
<dbReference type="InterPro" id="IPR036197">
    <property type="entry name" value="NarG-like_sf"/>
</dbReference>
<dbReference type="InterPro" id="IPR003816">
    <property type="entry name" value="Nitrate_red_gam"/>
</dbReference>
<dbReference type="InterPro" id="IPR003765">
    <property type="entry name" value="NO3_reductase_chaperone_NarJ"/>
</dbReference>
<dbReference type="InterPro" id="IPR036411">
    <property type="entry name" value="TorD-like_sf"/>
</dbReference>
<dbReference type="NCBIfam" id="TIGR00351">
    <property type="entry name" value="narI"/>
    <property type="match status" value="1"/>
</dbReference>
<dbReference type="NCBIfam" id="TIGR00684">
    <property type="entry name" value="narJ"/>
    <property type="match status" value="1"/>
</dbReference>
<dbReference type="PANTHER" id="PTHR30598">
    <property type="entry name" value="NITRATE REDUCTASE PRIVATE CHAPERONE, REDOX ENZYME MATURATION PROTEIN REMP FAMILY"/>
    <property type="match status" value="1"/>
</dbReference>
<dbReference type="PANTHER" id="PTHR30598:SF3">
    <property type="entry name" value="RESPIRATORY NITRATE REDUCTASE 1 GAMMA CHAIN"/>
    <property type="match status" value="1"/>
</dbReference>
<dbReference type="Pfam" id="PF00384">
    <property type="entry name" value="Molybdopterin"/>
    <property type="match status" value="1"/>
</dbReference>
<dbReference type="Pfam" id="PF02613">
    <property type="entry name" value="Nitrate_red_del"/>
    <property type="match status" value="1"/>
</dbReference>
<dbReference type="Pfam" id="PF02665">
    <property type="entry name" value="Nitrate_red_gam"/>
    <property type="match status" value="1"/>
</dbReference>
<dbReference type="SMART" id="SM00926">
    <property type="entry name" value="Molybdop_Fe4S4"/>
    <property type="match status" value="1"/>
</dbReference>
<dbReference type="SUPFAM" id="SSF53706">
    <property type="entry name" value="Formate dehydrogenase/DMSO reductase, domains 1-3"/>
    <property type="match status" value="1"/>
</dbReference>
<dbReference type="SUPFAM" id="SSF103501">
    <property type="entry name" value="Respiratory nitrate reductase 1 gamma chain"/>
    <property type="match status" value="1"/>
</dbReference>
<dbReference type="SUPFAM" id="SSF89155">
    <property type="entry name" value="TorD-like"/>
    <property type="match status" value="1"/>
</dbReference>
<dbReference type="PROSITE" id="PS51669">
    <property type="entry name" value="4FE4S_MOW_BIS_MGD"/>
    <property type="match status" value="1"/>
</dbReference>
<dbReference type="PROSITE" id="PS00551">
    <property type="entry name" value="MOLYBDOPTERIN_PROK_1"/>
    <property type="match status" value="1"/>
</dbReference>
<name>NARX_MYCTU</name>
<proteinExistence type="evidence at protein level"/>
<protein>
    <recommendedName>
        <fullName>Nitrate reductase-like protein NarX</fullName>
    </recommendedName>
</protein>
<accession>P9WJQ1</accession>
<accession>L0T7S1</accession>
<accession>P71994</accession>
<accession>Q7D821</accession>
<organism>
    <name type="scientific">Mycobacterium tuberculosis (strain ATCC 25618 / H37Rv)</name>
    <dbReference type="NCBI Taxonomy" id="83332"/>
    <lineage>
        <taxon>Bacteria</taxon>
        <taxon>Bacillati</taxon>
        <taxon>Actinomycetota</taxon>
        <taxon>Actinomycetes</taxon>
        <taxon>Mycobacteriales</taxon>
        <taxon>Mycobacteriaceae</taxon>
        <taxon>Mycobacterium</taxon>
        <taxon>Mycobacterium tuberculosis complex</taxon>
    </lineage>
</organism>
<reference key="1">
    <citation type="journal article" date="1998" name="Nature">
        <title>Deciphering the biology of Mycobacterium tuberculosis from the complete genome sequence.</title>
        <authorList>
            <person name="Cole S.T."/>
            <person name="Brosch R."/>
            <person name="Parkhill J."/>
            <person name="Garnier T."/>
            <person name="Churcher C.M."/>
            <person name="Harris D.E."/>
            <person name="Gordon S.V."/>
            <person name="Eiglmeier K."/>
            <person name="Gas S."/>
            <person name="Barry C.E. III"/>
            <person name="Tekaia F."/>
            <person name="Badcock K."/>
            <person name="Basham D."/>
            <person name="Brown D."/>
            <person name="Chillingworth T."/>
            <person name="Connor R."/>
            <person name="Davies R.M."/>
            <person name="Devlin K."/>
            <person name="Feltwell T."/>
            <person name="Gentles S."/>
            <person name="Hamlin N."/>
            <person name="Holroyd S."/>
            <person name="Hornsby T."/>
            <person name="Jagels K."/>
            <person name="Krogh A."/>
            <person name="McLean J."/>
            <person name="Moule S."/>
            <person name="Murphy L.D."/>
            <person name="Oliver S."/>
            <person name="Osborne J."/>
            <person name="Quail M.A."/>
            <person name="Rajandream M.A."/>
            <person name="Rogers J."/>
            <person name="Rutter S."/>
            <person name="Seeger K."/>
            <person name="Skelton S."/>
            <person name="Squares S."/>
            <person name="Squares R."/>
            <person name="Sulston J.E."/>
            <person name="Taylor K."/>
            <person name="Whitehead S."/>
            <person name="Barrell B.G."/>
        </authorList>
    </citation>
    <scope>NUCLEOTIDE SEQUENCE [LARGE SCALE GENOMIC DNA]</scope>
    <source>
        <strain>ATCC 25618 / H37Rv</strain>
    </source>
</reference>
<reference key="2">
    <citation type="journal article" date="2001" name="Proc. Natl. Acad. Sci. U.S.A.">
        <title>Regulation of the Mycobacterium tuberculosis hypoxic response gene encoding alpha -crystallin.</title>
        <authorList>
            <person name="Sherman D.R."/>
            <person name="Voskuil M."/>
            <person name="Schnappinger D."/>
            <person name="Liao R."/>
            <person name="Harrell M.I."/>
            <person name="Schoolnik G.K."/>
        </authorList>
    </citation>
    <scope>INDUCTION BY HYPOXIA</scope>
    <source>
        <strain>ATCC 25618 / H37Rv</strain>
    </source>
</reference>
<reference key="3">
    <citation type="journal article" date="2003" name="J. Bacteriol.">
        <title>Role of narK2X and narGHJI in hypoxic upregulation of nitrate reduction by Mycobacterium tuberculosis.</title>
        <authorList>
            <person name="Sohaskey C.D."/>
            <person name="Wayne L.G."/>
        </authorList>
    </citation>
    <scope>LACK OF NITRATE REDUCTASE ACTIVITY</scope>
    <scope>INDUCTION BY HYPOXIA</scope>
    <scope>DISRUPTION PHENOTYPE</scope>
    <scope>FUNCTION</scope>
    <source>
        <strain>ATCC 25618 / H37Rv</strain>
    </source>
</reference>
<reference key="4">
    <citation type="journal article" date="2003" name="J. Exp. Med.">
        <title>Inhibition of respiration by nitric oxide induces a Mycobacterium tuberculosis dormancy program.</title>
        <authorList>
            <person name="Voskuil M.I."/>
            <person name="Schnappinger D."/>
            <person name="Visconti K.C."/>
            <person name="Harrell M.I."/>
            <person name="Dolganov G.M."/>
            <person name="Sherman D.R."/>
            <person name="Schoolnik G.K."/>
        </authorList>
    </citation>
    <scope>INDUCTION BY NITRIC OXIDE (NO) AND BY HYPOXIA</scope>
    <scope>DORMANCY REGULON</scope>
    <source>
        <strain>ATCC 25618 / H37Rv</strain>
    </source>
</reference>
<reference key="5">
    <citation type="journal article" date="2008" name="Cell Host Microbe">
        <title>Mycobacterium tuberculosis senses host-derived carbon monoxide during macrophage infection.</title>
        <authorList>
            <person name="Shiloh M.U."/>
            <person name="Manzanillo P."/>
            <person name="Cox J.S."/>
        </authorList>
    </citation>
    <scope>INDUCTION BY CARBON MONOXIDE (CO)</scope>
    <source>
        <strain>ATCC 35801 / TMC 107 / Erdman</strain>
    </source>
</reference>
<reference key="6">
    <citation type="journal article" date="2008" name="J. Biol. Chem.">
        <title>Heme oxygenase-1-derived carbon monoxide induces the Mycobacterium tuberculosis dormancy regulon.</title>
        <authorList>
            <person name="Kumar A."/>
            <person name="Deshane J.S."/>
            <person name="Crossman D.K."/>
            <person name="Bolisetty S."/>
            <person name="Yan B.S."/>
            <person name="Kramnik I."/>
            <person name="Agarwal A."/>
            <person name="Steyn A.J."/>
        </authorList>
    </citation>
    <scope>INDUCTION BY CARBON MONOXIDE (CO)</scope>
    <scope>DORMANCY REGULON</scope>
    <source>
        <strain>ATCC 25618 / H37Rv</strain>
    </source>
</reference>
<reference key="7">
    <citation type="journal article" date="2009" name="Clin. Vaccine Immunol.">
        <title>Immunogenicity of novel DosR regulon-encoded candidate antigens of Mycobacterium tuberculosis in three high-burden populations in Africa.</title>
        <authorList>
            <person name="Black G.F."/>
            <person name="Thiel B.A."/>
            <person name="Ota M.O."/>
            <person name="Parida S.K."/>
            <person name="Adegbola R."/>
            <person name="Boom W.H."/>
            <person name="Dockrell H.M."/>
            <person name="Franken K.L."/>
            <person name="Friggen A.H."/>
            <person name="Hill P.C."/>
            <person name="Klein M.R."/>
            <person name="Lalor M.K."/>
            <person name="Mayanja H."/>
            <person name="Schoolnik G."/>
            <person name="Stanley K."/>
            <person name="Weldingh K."/>
            <person name="Kaufmann S.H."/>
            <person name="Walzl G."/>
            <person name="Ottenhoff T.H."/>
        </authorList>
    </citation>
    <scope>BIOTECHNOLOGY</scope>
</reference>
<reference key="8">
    <citation type="journal article" date="2011" name="Mol. Cell. Proteomics">
        <title>Proteogenomic analysis of Mycobacterium tuberculosis by high resolution mass spectrometry.</title>
        <authorList>
            <person name="Kelkar D.S."/>
            <person name="Kumar D."/>
            <person name="Kumar P."/>
            <person name="Balakrishnan L."/>
            <person name="Muthusamy B."/>
            <person name="Yadav A.K."/>
            <person name="Shrivastava P."/>
            <person name="Marimuthu A."/>
            <person name="Anand S."/>
            <person name="Sundaram H."/>
            <person name="Kingsbury R."/>
            <person name="Harsha H.C."/>
            <person name="Nair B."/>
            <person name="Prasad T.S."/>
            <person name="Chauhan D.S."/>
            <person name="Katoch K."/>
            <person name="Katoch V.M."/>
            <person name="Kumar P."/>
            <person name="Chaerkady R."/>
            <person name="Ramachandran S."/>
            <person name="Dash D."/>
            <person name="Pandey A."/>
        </authorList>
    </citation>
    <scope>IDENTIFICATION BY MASS SPECTROMETRY [LARGE SCALE ANALYSIS]</scope>
    <source>
        <strain>ATCC 25618 / H37Rv</strain>
    </source>
</reference>
<comment type="function">
    <text evidence="6">Does not seem to have nitrate reductase activity.</text>
</comment>
<comment type="cofactor">
    <cofactor evidence="10">
        <name>[4Fe-4S] cluster</name>
        <dbReference type="ChEBI" id="CHEBI:49883"/>
    </cofactor>
    <text evidence="10">Binds 1 [4Fe-4S] cluster per subunit.</text>
</comment>
<comment type="cofactor">
    <cofactor evidence="1">
        <name>Mo-bis(molybdopterin guanine dinucleotide)</name>
        <dbReference type="ChEBI" id="CHEBI:60539"/>
    </cofactor>
    <text evidence="1">Binds 1 molybdenum-bis(molybdopterin guanine dinucleotide) (Mo-bis-MGD) cofactor per subunit.</text>
</comment>
<comment type="cofactor">
    <cofactor evidence="10">
        <name>heme b</name>
        <dbReference type="ChEBI" id="CHEBI:60344"/>
    </cofactor>
    <text evidence="10">Binds 2 heme b groups per subunit. Heme 1 is located at the cytoplasmic interface, heme 2 is located at the extracellular interface. Electrons are transferred from the extracellular to the cytoplasmic heme.</text>
</comment>
<comment type="subcellular location">
    <subcellularLocation>
        <location evidence="10">Cell membrane</location>
        <topology evidence="10">Multi-pass membrane protein</topology>
    </subcellularLocation>
</comment>
<comment type="induction">
    <text evidence="4 5 6 7 8">A member of the dormancy regulon. Induced in response to reduced oxygen tension (hypoxia), low levels of nitric oxide (NO) and carbon monoxide (CO). It is hoped that this regulon will give insight into the latent, or dormant phase of infection. Induction by hypoxia is independent of nitrate and nitrate levels.</text>
</comment>
<comment type="disruption phenotype">
    <text evidence="6">No visible phenotype.</text>
</comment>
<comment type="biotechnology">
    <text evidence="9">This protein serves as an immunogenic antigen, inducing gamma-interferon responses in whole-blood cultures from M.tuberculosis-exposed adults in Uganda and South Africa, indicating this might be a good vaccine candidate.</text>
</comment>
<comment type="similarity">
    <text evidence="10">In the N-terminal section; belongs to the nitrate reductase alpha subunit family.</text>
</comment>
<comment type="similarity">
    <text evidence="10">In the central section; belongs to the NarJ/NarW family.</text>
</comment>
<comment type="similarity">
    <text evidence="10">In the C-terminal section; belongs to the nitrate reductase gamma subunit family.</text>
</comment>
<keyword id="KW-0004">4Fe-4S</keyword>
<keyword id="KW-1003">Cell membrane</keyword>
<keyword id="KW-0249">Electron transport</keyword>
<keyword id="KW-0349">Heme</keyword>
<keyword id="KW-0408">Iron</keyword>
<keyword id="KW-0411">Iron-sulfur</keyword>
<keyword id="KW-0472">Membrane</keyword>
<keyword id="KW-0479">Metal-binding</keyword>
<keyword id="KW-0500">Molybdenum</keyword>
<keyword id="KW-0534">Nitrate assimilation</keyword>
<keyword id="KW-0560">Oxidoreductase</keyword>
<keyword id="KW-1185">Reference proteome</keyword>
<keyword id="KW-0812">Transmembrane</keyword>
<keyword id="KW-1133">Transmembrane helix</keyword>
<keyword id="KW-0813">Transport</keyword>
<sequence length="652" mass="72825">MTVTPRTGSRIEELLARSGRFFIPGEISADLRTVTRRGGRDGDVFYRDRWSHDKVVRSTHGVNCTGSCSWKIYVKDDIITWETQETDYPSVGPDRPEYEPRGCPRGAAFSWYTYSPTRVRHPYARGVLVEMYREAKARLGDPVAAWADIQADPRRRRRYQRARGKGGLVRVSWAEATEMIAAAHVHTISTYGPDRVAGFSPIPAMSMVSHAAGSRFVELIGGVMTSFYDWYADLPVASPQVFGDQTDVPESGDWWDVVWQCASVLLTYPNSRQLGTAEELLAHIDGPAADLLGRTVSELRRADPLTAATRYVDTFDLRGRATLYLTYWTAGDTRNRGREMLAFAQTYRSTDVAPPRGETPDFLPVVLEFAATVDPEAGRRLLSGYRVPIAALCNALTEAALPYAHTVAAVCRTGDMMGELFWTVVPYVTMTIVAVGSWWRYRYDKFGWTTRSSQLYESRLLRIASPMFHFGILVVIVGHGIGLVIPQSWTQAAGLSEGAYHVQAVVLGSIAGITTLAGVTLLIYRRRTRGPVFMATTVNDKVMYLVLVAAIVAGLGATALGSGVVGEAYNYRETVSVWFRSVWVLQPRGDLMAEAPLYYQIHVLIGLALFALWPFTRLVHAFSAPIGYLFRPYIIYRSREELVLTRPRRRGW</sequence>
<feature type="chain" id="PRO_0000392915" description="Nitrate reductase-like protein NarX">
    <location>
        <begin position="1"/>
        <end position="652"/>
    </location>
</feature>
<feature type="transmembrane region" description="Helical" evidence="2">
    <location>
        <begin position="416"/>
        <end position="436"/>
    </location>
</feature>
<feature type="transmembrane region" description="Helical" evidence="2">
    <location>
        <begin position="466"/>
        <end position="486"/>
    </location>
</feature>
<feature type="transmembrane region" description="Helical" evidence="2">
    <location>
        <begin position="504"/>
        <end position="524"/>
    </location>
</feature>
<feature type="transmembrane region" description="Helical" evidence="2">
    <location>
        <begin position="545"/>
        <end position="565"/>
    </location>
</feature>
<feature type="transmembrane region" description="Helical" evidence="2">
    <location>
        <begin position="595"/>
        <end position="615"/>
    </location>
</feature>
<feature type="domain" description="4Fe-4S Mo/W bis-MGD-type" evidence="3">
    <location>
        <begin position="53"/>
        <end position="117"/>
    </location>
</feature>
<feature type="region of interest" description="Nitrate reductase alpha subunit">
    <location>
        <begin position="1"/>
        <end position="251"/>
    </location>
</feature>
<feature type="region of interest" description="Nitrate reductase delta subunit">
    <location>
        <begin position="258"/>
        <end position="415"/>
    </location>
</feature>
<feature type="region of interest" description="Nitrate reductase gamma subunit">
    <location>
        <begin position="416"/>
        <end position="652"/>
    </location>
</feature>
<feature type="binding site" evidence="3">
    <location>
        <position position="60"/>
    </location>
    <ligand>
        <name>[4Fe-4S] cluster</name>
        <dbReference type="ChEBI" id="CHEBI:49883"/>
    </ligand>
</feature>
<feature type="binding site" evidence="3">
    <location>
        <position position="64"/>
    </location>
    <ligand>
        <name>[4Fe-4S] cluster</name>
        <dbReference type="ChEBI" id="CHEBI:49883"/>
    </ligand>
</feature>
<feature type="binding site" evidence="3">
    <location>
        <position position="68"/>
    </location>
    <ligand>
        <name>[4Fe-4S] cluster</name>
        <dbReference type="ChEBI" id="CHEBI:49883"/>
    </ligand>
</feature>
<feature type="binding site" evidence="3">
    <location>
        <position position="103"/>
    </location>
    <ligand>
        <name>[4Fe-4S] cluster</name>
        <dbReference type="ChEBI" id="CHEBI:49883"/>
    </ligand>
</feature>
<feature type="binding site" evidence="1">
    <location>
        <position position="233"/>
    </location>
    <ligand>
        <name>Mo-bis(molybdopterin guanine dinucleotide)</name>
        <dbReference type="ChEBI" id="CHEBI:60539"/>
    </ligand>
    <ligandPart>
        <name>Mo</name>
        <dbReference type="ChEBI" id="CHEBI:28685"/>
    </ligandPart>
</feature>
<feature type="binding site" description="axial binding residue" evidence="1">
    <location>
        <position position="469"/>
    </location>
    <ligand>
        <name>heme b</name>
        <dbReference type="ChEBI" id="CHEBI:60344"/>
        <label>1</label>
    </ligand>
    <ligandPart>
        <name>Fe</name>
        <dbReference type="ChEBI" id="CHEBI:18248"/>
    </ligandPart>
</feature>
<feature type="binding site" description="axial binding residue" evidence="1">
    <location>
        <position position="479"/>
    </location>
    <ligand>
        <name>heme b</name>
        <dbReference type="ChEBI" id="CHEBI:60344"/>
        <label>2</label>
    </ligand>
    <ligandPart>
        <name>Fe</name>
        <dbReference type="ChEBI" id="CHEBI:18248"/>
    </ligandPart>
</feature>
<feature type="binding site" description="axial binding residue" evidence="1">
    <location>
        <position position="602"/>
    </location>
    <ligand>
        <name>heme b</name>
        <dbReference type="ChEBI" id="CHEBI:60344"/>
        <label>2</label>
    </ligand>
    <ligandPart>
        <name>Fe</name>
        <dbReference type="ChEBI" id="CHEBI:18248"/>
    </ligandPart>
</feature>
<feature type="binding site" description="axial binding residue" evidence="1">
    <location>
        <position position="620"/>
    </location>
    <ligand>
        <name>heme b</name>
        <dbReference type="ChEBI" id="CHEBI:60344"/>
        <label>1</label>
    </ligand>
    <ligandPart>
        <name>Fe</name>
        <dbReference type="ChEBI" id="CHEBI:18248"/>
    </ligandPart>
</feature>
<evidence type="ECO:0000250" key="1"/>
<evidence type="ECO:0000255" key="2"/>
<evidence type="ECO:0000255" key="3">
    <source>
        <dbReference type="PROSITE-ProRule" id="PRU01004"/>
    </source>
</evidence>
<evidence type="ECO:0000269" key="4">
    <source>
    </source>
</evidence>
<evidence type="ECO:0000269" key="5">
    <source>
    </source>
</evidence>
<evidence type="ECO:0000269" key="6">
    <source>
    </source>
</evidence>
<evidence type="ECO:0000269" key="7">
    <source>
    </source>
</evidence>
<evidence type="ECO:0000269" key="8">
    <source>
    </source>
</evidence>
<evidence type="ECO:0000269" key="9">
    <source>
    </source>
</evidence>
<evidence type="ECO:0000305" key="10"/>